<organism>
    <name type="scientific">Salmonella typhimurium (strain LT2 / SGSC1412 / ATCC 700720)</name>
    <dbReference type="NCBI Taxonomy" id="99287"/>
    <lineage>
        <taxon>Bacteria</taxon>
        <taxon>Pseudomonadati</taxon>
        <taxon>Pseudomonadota</taxon>
        <taxon>Gammaproteobacteria</taxon>
        <taxon>Enterobacterales</taxon>
        <taxon>Enterobacteriaceae</taxon>
        <taxon>Salmonella</taxon>
    </lineage>
</organism>
<dbReference type="EMBL" id="AE006468">
    <property type="protein sequence ID" value="AAL22320.1"/>
    <property type="molecule type" value="Genomic_DNA"/>
</dbReference>
<dbReference type="RefSeq" id="NP_462361.1">
    <property type="nucleotide sequence ID" value="NC_003197.2"/>
</dbReference>
<dbReference type="RefSeq" id="WP_000398133.1">
    <property type="nucleotide sequence ID" value="NC_003197.2"/>
</dbReference>
<dbReference type="SMR" id="Q8ZLL3"/>
<dbReference type="STRING" id="99287.STM3457"/>
<dbReference type="PaxDb" id="99287-STM3457"/>
<dbReference type="GeneID" id="1254980"/>
<dbReference type="KEGG" id="stm:STM3457"/>
<dbReference type="PATRIC" id="fig|99287.12.peg.3654"/>
<dbReference type="HOGENOM" id="CLU_005126_9_3_6"/>
<dbReference type="OMA" id="AHFRKLD"/>
<dbReference type="PhylomeDB" id="Q8ZLL3"/>
<dbReference type="BioCyc" id="SENT99287:STM3457-MONOMER"/>
<dbReference type="Proteomes" id="UP000001014">
    <property type="component" value="Chromosome"/>
</dbReference>
<dbReference type="GO" id="GO:0005886">
    <property type="term" value="C:plasma membrane"/>
    <property type="evidence" value="ECO:0000318"/>
    <property type="project" value="GO_Central"/>
</dbReference>
<dbReference type="GO" id="GO:0015503">
    <property type="term" value="F:glutathione-regulated potassium exporter activity"/>
    <property type="evidence" value="ECO:0007669"/>
    <property type="project" value="UniProtKB-UniRule"/>
</dbReference>
<dbReference type="GO" id="GO:1902600">
    <property type="term" value="P:proton transmembrane transport"/>
    <property type="evidence" value="ECO:0007669"/>
    <property type="project" value="InterPro"/>
</dbReference>
<dbReference type="FunFam" id="1.20.1530.20:FF:000001">
    <property type="entry name" value="Glutathione-regulated potassium-efflux system protein KefB"/>
    <property type="match status" value="1"/>
</dbReference>
<dbReference type="FunFam" id="3.40.50.720:FF:000036">
    <property type="entry name" value="Glutathione-regulated potassium-efflux system protein KefB"/>
    <property type="match status" value="1"/>
</dbReference>
<dbReference type="Gene3D" id="1.20.1530.20">
    <property type="match status" value="1"/>
</dbReference>
<dbReference type="Gene3D" id="3.40.50.720">
    <property type="entry name" value="NAD(P)-binding Rossmann-like Domain"/>
    <property type="match status" value="1"/>
</dbReference>
<dbReference type="HAMAP" id="MF_01412">
    <property type="entry name" value="K_H_efflux_KefB"/>
    <property type="match status" value="1"/>
</dbReference>
<dbReference type="InterPro" id="IPR006153">
    <property type="entry name" value="Cation/H_exchanger_TM"/>
</dbReference>
<dbReference type="InterPro" id="IPR004771">
    <property type="entry name" value="K/H_exchanger"/>
</dbReference>
<dbReference type="InterPro" id="IPR020884">
    <property type="entry name" value="K_H_efflux_KefB"/>
</dbReference>
<dbReference type="InterPro" id="IPR006036">
    <property type="entry name" value="K_uptake_TrkA"/>
</dbReference>
<dbReference type="InterPro" id="IPR038770">
    <property type="entry name" value="Na+/solute_symporter_sf"/>
</dbReference>
<dbReference type="InterPro" id="IPR036291">
    <property type="entry name" value="NAD(P)-bd_dom_sf"/>
</dbReference>
<dbReference type="InterPro" id="IPR003148">
    <property type="entry name" value="RCK_N"/>
</dbReference>
<dbReference type="NCBIfam" id="TIGR00932">
    <property type="entry name" value="2a37"/>
    <property type="match status" value="1"/>
</dbReference>
<dbReference type="NCBIfam" id="NF002973">
    <property type="entry name" value="PRK03659.1"/>
    <property type="match status" value="1"/>
</dbReference>
<dbReference type="PANTHER" id="PTHR46157">
    <property type="entry name" value="K(+) EFFLUX ANTIPORTER 3, CHLOROPLASTIC"/>
    <property type="match status" value="1"/>
</dbReference>
<dbReference type="PANTHER" id="PTHR46157:SF4">
    <property type="entry name" value="K(+) EFFLUX ANTIPORTER 3, CHLOROPLASTIC"/>
    <property type="match status" value="1"/>
</dbReference>
<dbReference type="Pfam" id="PF00999">
    <property type="entry name" value="Na_H_Exchanger"/>
    <property type="match status" value="1"/>
</dbReference>
<dbReference type="Pfam" id="PF02254">
    <property type="entry name" value="TrkA_N"/>
    <property type="match status" value="1"/>
</dbReference>
<dbReference type="PRINTS" id="PR00335">
    <property type="entry name" value="KUPTAKETRKA"/>
</dbReference>
<dbReference type="SUPFAM" id="SSF51735">
    <property type="entry name" value="NAD(P)-binding Rossmann-fold domains"/>
    <property type="match status" value="1"/>
</dbReference>
<dbReference type="PROSITE" id="PS51201">
    <property type="entry name" value="RCK_N"/>
    <property type="match status" value="1"/>
</dbReference>
<comment type="function">
    <text evidence="1">Pore-forming subunit of a potassium efflux system that confers protection against electrophiles. Catalyzes K(+)/H(+) antiport.</text>
</comment>
<comment type="subunit">
    <text evidence="1">Interacts with the regulatory subunit KefG.</text>
</comment>
<comment type="subcellular location">
    <subcellularLocation>
        <location evidence="1">Cell inner membrane</location>
        <topology evidence="1">Multi-pass membrane protein</topology>
    </subcellularLocation>
</comment>
<comment type="similarity">
    <text evidence="1">Belongs to the monovalent cation:proton antiporter 2 (CPA2) transporter (TC 2.A.37) family. KefB subfamily.</text>
</comment>
<evidence type="ECO:0000255" key="1">
    <source>
        <dbReference type="HAMAP-Rule" id="MF_01412"/>
    </source>
</evidence>
<evidence type="ECO:0000255" key="2">
    <source>
        <dbReference type="PROSITE-ProRule" id="PRU00543"/>
    </source>
</evidence>
<protein>
    <recommendedName>
        <fullName evidence="1">Glutathione-regulated potassium-efflux system protein KefB</fullName>
    </recommendedName>
    <alternativeName>
        <fullName evidence="1">K(+)/H(+) antiporter</fullName>
    </alternativeName>
</protein>
<name>KEFB_SALTY</name>
<reference key="1">
    <citation type="journal article" date="2001" name="Nature">
        <title>Complete genome sequence of Salmonella enterica serovar Typhimurium LT2.</title>
        <authorList>
            <person name="McClelland M."/>
            <person name="Sanderson K.E."/>
            <person name="Spieth J."/>
            <person name="Clifton S.W."/>
            <person name="Latreille P."/>
            <person name="Courtney L."/>
            <person name="Porwollik S."/>
            <person name="Ali J."/>
            <person name="Dante M."/>
            <person name="Du F."/>
            <person name="Hou S."/>
            <person name="Layman D."/>
            <person name="Leonard S."/>
            <person name="Nguyen C."/>
            <person name="Scott K."/>
            <person name="Holmes A."/>
            <person name="Grewal N."/>
            <person name="Mulvaney E."/>
            <person name="Ryan E."/>
            <person name="Sun H."/>
            <person name="Florea L."/>
            <person name="Miller W."/>
            <person name="Stoneking T."/>
            <person name="Nhan M."/>
            <person name="Waterston R."/>
            <person name="Wilson R.K."/>
        </authorList>
    </citation>
    <scope>NUCLEOTIDE SEQUENCE [LARGE SCALE GENOMIC DNA]</scope>
    <source>
        <strain>LT2 / SGSC1412 / ATCC 700720</strain>
    </source>
</reference>
<keyword id="KW-0050">Antiport</keyword>
<keyword id="KW-0997">Cell inner membrane</keyword>
<keyword id="KW-1003">Cell membrane</keyword>
<keyword id="KW-0406">Ion transport</keyword>
<keyword id="KW-0472">Membrane</keyword>
<keyword id="KW-0630">Potassium</keyword>
<keyword id="KW-0633">Potassium transport</keyword>
<keyword id="KW-1185">Reference proteome</keyword>
<keyword id="KW-0812">Transmembrane</keyword>
<keyword id="KW-1133">Transmembrane helix</keyword>
<keyword id="KW-0813">Transport</keyword>
<sequence>MEGADLLTAGVLFLFAAVAAVPLAARLGIGAVLGYLLAGIAIGPWGLGFISDVDEILHFSELGVVFLMFIIGLELNPSRLWQLRRSIFGVGAAQVLLSAAVLAGLLMLADFLWQAAVVGGIGLAMSSTAMALQLMREKGMNRSESGQLGFSVLLFQDLAVIPALALVPLLAGSADEHFDWFKVAMKVLAFAVMLIGGRYLLRPVFRFIAASGVREVFTAATLLLVLSAALFMDALGLSMALGTFIAGVLLAESEYRHELENAIDPFKGLLLGLFFISVGMSLNLGVLYTHLLWVAASVVILVVIKMLTLYLLARLYGIRSSERMQFASVLSQGGEFAFVLFSTASSQRLFQGDQMALLLVTVTLSMMTTPLLMKGIDKWLSRRLNGPEENDEKPWVEDDKPQVIVVGFGRFGQVIARLLMANKMRITVLERDIGAVNLMRKYGYKVYYGDATQVELLRSAGAEAAESIVITCNEPEDTMKLVALCQQHFPHLHILARARGRVEAHELLQAGVTQFSRETFSSALELGRKTLVSLGMHPHQAQRAQLHFRRLDMRMLRELIPEHSDMVQISRAREARRELEEIFQREMQQERRQLDGWDEFE</sequence>
<gene>
    <name evidence="1" type="primary">kefB</name>
    <name type="ordered locus">STM3457</name>
</gene>
<accession>Q8ZLL3</accession>
<feature type="chain" id="PRO_0000196602" description="Glutathione-regulated potassium-efflux system protein KefB">
    <location>
        <begin position="1"/>
        <end position="601"/>
    </location>
</feature>
<feature type="transmembrane region" description="Helical" evidence="1">
    <location>
        <begin position="4"/>
        <end position="24"/>
    </location>
</feature>
<feature type="transmembrane region" description="Helical" evidence="1">
    <location>
        <begin position="29"/>
        <end position="49"/>
    </location>
</feature>
<feature type="transmembrane region" description="Helical" evidence="1">
    <location>
        <begin position="55"/>
        <end position="75"/>
    </location>
</feature>
<feature type="transmembrane region" description="Helical" evidence="1">
    <location>
        <begin position="87"/>
        <end position="107"/>
    </location>
</feature>
<feature type="transmembrane region" description="Helical" evidence="1">
    <location>
        <begin position="111"/>
        <end position="131"/>
    </location>
</feature>
<feature type="transmembrane region" description="Helical" evidence="1">
    <location>
        <begin position="152"/>
        <end position="172"/>
    </location>
</feature>
<feature type="transmembrane region" description="Helical" evidence="1">
    <location>
        <begin position="177"/>
        <end position="197"/>
    </location>
</feature>
<feature type="transmembrane region" description="Helical" evidence="1">
    <location>
        <begin position="207"/>
        <end position="227"/>
    </location>
</feature>
<feature type="transmembrane region" description="Helical" evidence="1">
    <location>
        <begin position="230"/>
        <end position="250"/>
    </location>
</feature>
<feature type="transmembrane region" description="Helical" evidence="1">
    <location>
        <begin position="262"/>
        <end position="282"/>
    </location>
</feature>
<feature type="transmembrane region" description="Helical" evidence="1">
    <location>
        <begin position="284"/>
        <end position="304"/>
    </location>
</feature>
<feature type="transmembrane region" description="Helical" evidence="1">
    <location>
        <begin position="324"/>
        <end position="344"/>
    </location>
</feature>
<feature type="transmembrane region" description="Helical" evidence="1">
    <location>
        <begin position="356"/>
        <end position="376"/>
    </location>
</feature>
<feature type="domain" description="RCK N-terminal" evidence="2">
    <location>
        <begin position="400"/>
        <end position="519"/>
    </location>
</feature>
<proteinExistence type="inferred from homology"/>